<sequence>MANVGKVVQIVGAVLDVKFDSEQSLPNLLNALVIKLGDKEIVAEVAQHIGDDTVRCIAMSATDGLVRGMEVVDTGGPISVPVGDETLGRIFNVLGKPVDGKPAPKSAPKLPIHRPAPAYDELETTAEILETGIKVVDLLAPYLKGGKIGLFGGAGVGKTVLIQELINNIAKQHGGISVFSGVGERTREGNDLYGEMSESGVINKTALVFGQMNEPPGARMRVALTGLTMAEHFRDEQGQDVLLFVDNIFRFTQAGSEVSALLGRMPSAVGYQPTLATEMGALQERITSTKKGSITSVQAVYVPADDLTDPAPATTFSHLDAKTVLSRQISSLGIYPAVDPLESTSRILDPSIVGKEHYEVARGVQSILQRYKELQDIIAILGMDELSDEDKLIVARARKIQRFLSQSFTVAEQFTGNPGQYVPVKETVRGFKEILEGKHDDLPESAFLFVGTIEDAVRKAKGSM</sequence>
<gene>
    <name evidence="1" type="primary">atpD</name>
    <name type="ordered locus">CD630_34680</name>
</gene>
<protein>
    <recommendedName>
        <fullName evidence="1">ATP synthase subunit beta</fullName>
        <ecNumber evidence="1">7.1.2.2</ecNumber>
    </recommendedName>
    <alternativeName>
        <fullName evidence="1">ATP synthase F1 sector subunit beta</fullName>
    </alternativeName>
    <alternativeName>
        <fullName evidence="1">F-ATPase subunit beta</fullName>
    </alternativeName>
</protein>
<feature type="chain" id="PRO_0000339521" description="ATP synthase subunit beta">
    <location>
        <begin position="1"/>
        <end position="464"/>
    </location>
</feature>
<feature type="binding site" evidence="1">
    <location>
        <begin position="152"/>
        <end position="159"/>
    </location>
    <ligand>
        <name>ATP</name>
        <dbReference type="ChEBI" id="CHEBI:30616"/>
    </ligand>
</feature>
<proteinExistence type="inferred from homology"/>
<reference key="1">
    <citation type="journal article" date="2006" name="Nat. Genet.">
        <title>The multidrug-resistant human pathogen Clostridium difficile has a highly mobile, mosaic genome.</title>
        <authorList>
            <person name="Sebaihia M."/>
            <person name="Wren B.W."/>
            <person name="Mullany P."/>
            <person name="Fairweather N.F."/>
            <person name="Minton N."/>
            <person name="Stabler R."/>
            <person name="Thomson N.R."/>
            <person name="Roberts A.P."/>
            <person name="Cerdeno-Tarraga A.M."/>
            <person name="Wang H."/>
            <person name="Holden M.T.G."/>
            <person name="Wright A."/>
            <person name="Churcher C."/>
            <person name="Quail M.A."/>
            <person name="Baker S."/>
            <person name="Bason N."/>
            <person name="Brooks K."/>
            <person name="Chillingworth T."/>
            <person name="Cronin A."/>
            <person name="Davis P."/>
            <person name="Dowd L."/>
            <person name="Fraser A."/>
            <person name="Feltwell T."/>
            <person name="Hance Z."/>
            <person name="Holroyd S."/>
            <person name="Jagels K."/>
            <person name="Moule S."/>
            <person name="Mungall K."/>
            <person name="Price C."/>
            <person name="Rabbinowitsch E."/>
            <person name="Sharp S."/>
            <person name="Simmonds M."/>
            <person name="Stevens K."/>
            <person name="Unwin L."/>
            <person name="Whithead S."/>
            <person name="Dupuy B."/>
            <person name="Dougan G."/>
            <person name="Barrell B."/>
            <person name="Parkhill J."/>
        </authorList>
    </citation>
    <scope>NUCLEOTIDE SEQUENCE [LARGE SCALE GENOMIC DNA]</scope>
    <source>
        <strain>630</strain>
    </source>
</reference>
<dbReference type="EC" id="7.1.2.2" evidence="1"/>
<dbReference type="EMBL" id="AM180355">
    <property type="protein sequence ID" value="CAJ70371.1"/>
    <property type="molecule type" value="Genomic_DNA"/>
</dbReference>
<dbReference type="RefSeq" id="WP_003425850.1">
    <property type="nucleotide sequence ID" value="NZ_JAUPES010000009.1"/>
</dbReference>
<dbReference type="RefSeq" id="YP_001089988.1">
    <property type="nucleotide sequence ID" value="NC_009089.1"/>
</dbReference>
<dbReference type="SMR" id="Q180W5"/>
<dbReference type="STRING" id="272563.CD630_34680"/>
<dbReference type="EnsemblBacteria" id="CAJ70371">
    <property type="protein sequence ID" value="CAJ70371"/>
    <property type="gene ID" value="CD630_34680"/>
</dbReference>
<dbReference type="GeneID" id="66355929"/>
<dbReference type="KEGG" id="cdf:CD630_34680"/>
<dbReference type="KEGG" id="pdc:CDIF630_03779"/>
<dbReference type="PATRIC" id="fig|272563.120.peg.3665"/>
<dbReference type="eggNOG" id="COG0055">
    <property type="taxonomic scope" value="Bacteria"/>
</dbReference>
<dbReference type="OrthoDB" id="9801639at2"/>
<dbReference type="PhylomeDB" id="Q180W5"/>
<dbReference type="BioCyc" id="PDIF272563:G12WB-3648-MONOMER"/>
<dbReference type="Proteomes" id="UP000001978">
    <property type="component" value="Chromosome"/>
</dbReference>
<dbReference type="GO" id="GO:0005886">
    <property type="term" value="C:plasma membrane"/>
    <property type="evidence" value="ECO:0007669"/>
    <property type="project" value="UniProtKB-SubCell"/>
</dbReference>
<dbReference type="GO" id="GO:0045259">
    <property type="term" value="C:proton-transporting ATP synthase complex"/>
    <property type="evidence" value="ECO:0007669"/>
    <property type="project" value="UniProtKB-KW"/>
</dbReference>
<dbReference type="GO" id="GO:0005524">
    <property type="term" value="F:ATP binding"/>
    <property type="evidence" value="ECO:0007669"/>
    <property type="project" value="UniProtKB-UniRule"/>
</dbReference>
<dbReference type="GO" id="GO:0016887">
    <property type="term" value="F:ATP hydrolysis activity"/>
    <property type="evidence" value="ECO:0007669"/>
    <property type="project" value="InterPro"/>
</dbReference>
<dbReference type="GO" id="GO:0046933">
    <property type="term" value="F:proton-transporting ATP synthase activity, rotational mechanism"/>
    <property type="evidence" value="ECO:0007669"/>
    <property type="project" value="UniProtKB-UniRule"/>
</dbReference>
<dbReference type="CDD" id="cd18110">
    <property type="entry name" value="ATP-synt_F1_beta_C"/>
    <property type="match status" value="1"/>
</dbReference>
<dbReference type="CDD" id="cd18115">
    <property type="entry name" value="ATP-synt_F1_beta_N"/>
    <property type="match status" value="1"/>
</dbReference>
<dbReference type="CDD" id="cd01133">
    <property type="entry name" value="F1-ATPase_beta_CD"/>
    <property type="match status" value="1"/>
</dbReference>
<dbReference type="FunFam" id="1.10.1140.10:FF:000001">
    <property type="entry name" value="ATP synthase subunit beta"/>
    <property type="match status" value="1"/>
</dbReference>
<dbReference type="FunFam" id="3.40.50.300:FF:000004">
    <property type="entry name" value="ATP synthase subunit beta"/>
    <property type="match status" value="1"/>
</dbReference>
<dbReference type="Gene3D" id="2.40.10.170">
    <property type="match status" value="1"/>
</dbReference>
<dbReference type="Gene3D" id="1.10.1140.10">
    <property type="entry name" value="Bovine Mitochondrial F1-atpase, Atp Synthase Beta Chain, Chain D, domain 3"/>
    <property type="match status" value="1"/>
</dbReference>
<dbReference type="Gene3D" id="3.40.50.300">
    <property type="entry name" value="P-loop containing nucleotide triphosphate hydrolases"/>
    <property type="match status" value="1"/>
</dbReference>
<dbReference type="HAMAP" id="MF_01347">
    <property type="entry name" value="ATP_synth_beta_bact"/>
    <property type="match status" value="1"/>
</dbReference>
<dbReference type="InterPro" id="IPR003593">
    <property type="entry name" value="AAA+_ATPase"/>
</dbReference>
<dbReference type="InterPro" id="IPR055190">
    <property type="entry name" value="ATP-synt_VA_C"/>
</dbReference>
<dbReference type="InterPro" id="IPR005722">
    <property type="entry name" value="ATP_synth_F1_bsu"/>
</dbReference>
<dbReference type="InterPro" id="IPR020003">
    <property type="entry name" value="ATPase_a/bsu_AS"/>
</dbReference>
<dbReference type="InterPro" id="IPR050053">
    <property type="entry name" value="ATPase_alpha/beta_chains"/>
</dbReference>
<dbReference type="InterPro" id="IPR004100">
    <property type="entry name" value="ATPase_F1/V1/A1_a/bsu_N"/>
</dbReference>
<dbReference type="InterPro" id="IPR036121">
    <property type="entry name" value="ATPase_F1/V1/A1_a/bsu_N_sf"/>
</dbReference>
<dbReference type="InterPro" id="IPR000194">
    <property type="entry name" value="ATPase_F1/V1/A1_a/bsu_nucl-bd"/>
</dbReference>
<dbReference type="InterPro" id="IPR024034">
    <property type="entry name" value="ATPase_F1/V1_b/a_C"/>
</dbReference>
<dbReference type="InterPro" id="IPR027417">
    <property type="entry name" value="P-loop_NTPase"/>
</dbReference>
<dbReference type="NCBIfam" id="TIGR01039">
    <property type="entry name" value="atpD"/>
    <property type="match status" value="1"/>
</dbReference>
<dbReference type="PANTHER" id="PTHR15184">
    <property type="entry name" value="ATP SYNTHASE"/>
    <property type="match status" value="1"/>
</dbReference>
<dbReference type="PANTHER" id="PTHR15184:SF71">
    <property type="entry name" value="ATP SYNTHASE SUBUNIT BETA, MITOCHONDRIAL"/>
    <property type="match status" value="1"/>
</dbReference>
<dbReference type="Pfam" id="PF00006">
    <property type="entry name" value="ATP-synt_ab"/>
    <property type="match status" value="1"/>
</dbReference>
<dbReference type="Pfam" id="PF02874">
    <property type="entry name" value="ATP-synt_ab_N"/>
    <property type="match status" value="1"/>
</dbReference>
<dbReference type="Pfam" id="PF22919">
    <property type="entry name" value="ATP-synt_VA_C"/>
    <property type="match status" value="1"/>
</dbReference>
<dbReference type="SMART" id="SM00382">
    <property type="entry name" value="AAA"/>
    <property type="match status" value="1"/>
</dbReference>
<dbReference type="SUPFAM" id="SSF47917">
    <property type="entry name" value="C-terminal domain of alpha and beta subunits of F1 ATP synthase"/>
    <property type="match status" value="1"/>
</dbReference>
<dbReference type="SUPFAM" id="SSF50615">
    <property type="entry name" value="N-terminal domain of alpha and beta subunits of F1 ATP synthase"/>
    <property type="match status" value="1"/>
</dbReference>
<dbReference type="SUPFAM" id="SSF52540">
    <property type="entry name" value="P-loop containing nucleoside triphosphate hydrolases"/>
    <property type="match status" value="1"/>
</dbReference>
<dbReference type="PROSITE" id="PS00152">
    <property type="entry name" value="ATPASE_ALPHA_BETA"/>
    <property type="match status" value="1"/>
</dbReference>
<evidence type="ECO:0000255" key="1">
    <source>
        <dbReference type="HAMAP-Rule" id="MF_01347"/>
    </source>
</evidence>
<name>ATPB_CLOD6</name>
<organism>
    <name type="scientific">Clostridioides difficile (strain 630)</name>
    <name type="common">Peptoclostridium difficile</name>
    <dbReference type="NCBI Taxonomy" id="272563"/>
    <lineage>
        <taxon>Bacteria</taxon>
        <taxon>Bacillati</taxon>
        <taxon>Bacillota</taxon>
        <taxon>Clostridia</taxon>
        <taxon>Peptostreptococcales</taxon>
        <taxon>Peptostreptococcaceae</taxon>
        <taxon>Clostridioides</taxon>
    </lineage>
</organism>
<accession>Q180W5</accession>
<keyword id="KW-0066">ATP synthesis</keyword>
<keyword id="KW-0067">ATP-binding</keyword>
<keyword id="KW-1003">Cell membrane</keyword>
<keyword id="KW-0139">CF(1)</keyword>
<keyword id="KW-0375">Hydrogen ion transport</keyword>
<keyword id="KW-0406">Ion transport</keyword>
<keyword id="KW-0472">Membrane</keyword>
<keyword id="KW-0547">Nucleotide-binding</keyword>
<keyword id="KW-1185">Reference proteome</keyword>
<keyword id="KW-1278">Translocase</keyword>
<keyword id="KW-0813">Transport</keyword>
<comment type="function">
    <text evidence="1">Produces ATP from ADP in the presence of a proton gradient across the membrane. The catalytic sites are hosted primarily by the beta subunits.</text>
</comment>
<comment type="catalytic activity">
    <reaction evidence="1">
        <text>ATP + H2O + 4 H(+)(in) = ADP + phosphate + 5 H(+)(out)</text>
        <dbReference type="Rhea" id="RHEA:57720"/>
        <dbReference type="ChEBI" id="CHEBI:15377"/>
        <dbReference type="ChEBI" id="CHEBI:15378"/>
        <dbReference type="ChEBI" id="CHEBI:30616"/>
        <dbReference type="ChEBI" id="CHEBI:43474"/>
        <dbReference type="ChEBI" id="CHEBI:456216"/>
        <dbReference type="EC" id="7.1.2.2"/>
    </reaction>
</comment>
<comment type="subunit">
    <text evidence="1">F-type ATPases have 2 components, CF(1) - the catalytic core - and CF(0) - the membrane proton channel. CF(1) has five subunits: alpha(3), beta(3), gamma(1), delta(1), epsilon(1). CF(0) has three main subunits: a(1), b(2) and c(9-12). The alpha and beta chains form an alternating ring which encloses part of the gamma chain. CF(1) is attached to CF(0) by a central stalk formed by the gamma and epsilon chains, while a peripheral stalk is formed by the delta and b chains.</text>
</comment>
<comment type="subcellular location">
    <subcellularLocation>
        <location evidence="1">Cell membrane</location>
        <topology evidence="1">Peripheral membrane protein</topology>
    </subcellularLocation>
</comment>
<comment type="similarity">
    <text evidence="1">Belongs to the ATPase alpha/beta chains family.</text>
</comment>